<keyword id="KW-0001">2Fe-2S</keyword>
<keyword id="KW-1015">Disulfide bond</keyword>
<keyword id="KW-0408">Iron</keyword>
<keyword id="KW-0411">Iron-sulfur</keyword>
<keyword id="KW-0472">Membrane</keyword>
<keyword id="KW-0479">Metal-binding</keyword>
<keyword id="KW-1267">Proteomics identification</keyword>
<keyword id="KW-1185">Reference proteome</keyword>
<keyword id="KW-0812">Transmembrane</keyword>
<keyword id="KW-1133">Transmembrane helix</keyword>
<feature type="chain" id="PRO_0000342402" description="Putative cytochrome b-c1 complex subunit Rieske-like protein 1">
    <location>
        <begin position="1"/>
        <end position="283"/>
    </location>
</feature>
<feature type="transmembrane region" description="Helical" evidence="1">
    <location>
        <begin position="116"/>
        <end position="149"/>
    </location>
</feature>
<feature type="domain" description="Rieske" evidence="3">
    <location>
        <begin position="196"/>
        <end position="281"/>
    </location>
</feature>
<feature type="binding site" evidence="3">
    <location>
        <position position="226"/>
    </location>
    <ligand>
        <name>[2Fe-2S] cluster</name>
        <dbReference type="ChEBI" id="CHEBI:190135"/>
    </ligand>
</feature>
<feature type="binding site" evidence="3">
    <location>
        <position position="228"/>
    </location>
    <ligand>
        <name>[2Fe-2S] cluster</name>
        <dbReference type="ChEBI" id="CHEBI:190135"/>
    </ligand>
</feature>
<feature type="binding site" evidence="3">
    <location>
        <position position="245"/>
    </location>
    <ligand>
        <name>[2Fe-2S] cluster</name>
        <dbReference type="ChEBI" id="CHEBI:190135"/>
    </ligand>
</feature>
<feature type="binding site" evidence="3">
    <location>
        <position position="248"/>
    </location>
    <ligand>
        <name>[2Fe-2S] cluster</name>
        <dbReference type="ChEBI" id="CHEBI:190135"/>
    </ligand>
</feature>
<feature type="disulfide bond" evidence="3">
    <location>
        <begin position="231"/>
        <end position="247"/>
    </location>
</feature>
<reference key="1">
    <citation type="journal article" date="1999" name="Nature">
        <title>The DNA sequence of human chromosome 22.</title>
        <authorList>
            <person name="Dunham I."/>
            <person name="Hunt A.R."/>
            <person name="Collins J.E."/>
            <person name="Bruskiewich R."/>
            <person name="Beare D.M."/>
            <person name="Clamp M."/>
            <person name="Smink L.J."/>
            <person name="Ainscough R."/>
            <person name="Almeida J.P."/>
            <person name="Babbage A.K."/>
            <person name="Bagguley C."/>
            <person name="Bailey J."/>
            <person name="Barlow K.F."/>
            <person name="Bates K.N."/>
            <person name="Beasley O.P."/>
            <person name="Bird C.P."/>
            <person name="Blakey S.E."/>
            <person name="Bridgeman A.M."/>
            <person name="Buck D."/>
            <person name="Burgess J."/>
            <person name="Burrill W.D."/>
            <person name="Burton J."/>
            <person name="Carder C."/>
            <person name="Carter N.P."/>
            <person name="Chen Y."/>
            <person name="Clark G."/>
            <person name="Clegg S.M."/>
            <person name="Cobley V.E."/>
            <person name="Cole C.G."/>
            <person name="Collier R.E."/>
            <person name="Connor R."/>
            <person name="Conroy D."/>
            <person name="Corby N.R."/>
            <person name="Coville G.J."/>
            <person name="Cox A.V."/>
            <person name="Davis J."/>
            <person name="Dawson E."/>
            <person name="Dhami P.D."/>
            <person name="Dockree C."/>
            <person name="Dodsworth S.J."/>
            <person name="Durbin R.M."/>
            <person name="Ellington A.G."/>
            <person name="Evans K.L."/>
            <person name="Fey J.M."/>
            <person name="Fleming K."/>
            <person name="French L."/>
            <person name="Garner A.A."/>
            <person name="Gilbert J.G.R."/>
            <person name="Goward M.E."/>
            <person name="Grafham D.V."/>
            <person name="Griffiths M.N.D."/>
            <person name="Hall C."/>
            <person name="Hall R.E."/>
            <person name="Hall-Tamlyn G."/>
            <person name="Heathcott R.W."/>
            <person name="Ho S."/>
            <person name="Holmes S."/>
            <person name="Hunt S.E."/>
            <person name="Jones M.C."/>
            <person name="Kershaw J."/>
            <person name="Kimberley A.M."/>
            <person name="King A."/>
            <person name="Laird G.K."/>
            <person name="Langford C.F."/>
            <person name="Leversha M.A."/>
            <person name="Lloyd C."/>
            <person name="Lloyd D.M."/>
            <person name="Martyn I.D."/>
            <person name="Mashreghi-Mohammadi M."/>
            <person name="Matthews L.H."/>
            <person name="Mccann O.T."/>
            <person name="Mcclay J."/>
            <person name="Mclaren S."/>
            <person name="McMurray A.A."/>
            <person name="Milne S.A."/>
            <person name="Mortimore B.J."/>
            <person name="Odell C.N."/>
            <person name="Pavitt R."/>
            <person name="Pearce A.V."/>
            <person name="Pearson D."/>
            <person name="Phillimore B.J.C.T."/>
            <person name="Phillips S.H."/>
            <person name="Plumb R.W."/>
            <person name="Ramsay H."/>
            <person name="Ramsey Y."/>
            <person name="Rogers L."/>
            <person name="Ross M.T."/>
            <person name="Scott C.E."/>
            <person name="Sehra H.K."/>
            <person name="Skuce C.D."/>
            <person name="Smalley S."/>
            <person name="Smith M.L."/>
            <person name="Soderlund C."/>
            <person name="Spragon L."/>
            <person name="Steward C.A."/>
            <person name="Sulston J.E."/>
            <person name="Swann R.M."/>
            <person name="Vaudin M."/>
            <person name="Wall M."/>
            <person name="Wallis J.M."/>
            <person name="Whiteley M.N."/>
            <person name="Willey D.L."/>
            <person name="Williams L."/>
            <person name="Williams S.A."/>
            <person name="Williamson H."/>
            <person name="Wilmer T.E."/>
            <person name="Wilming L."/>
            <person name="Wright C.L."/>
            <person name="Hubbard T."/>
            <person name="Bentley D.R."/>
            <person name="Beck S."/>
            <person name="Rogers J."/>
            <person name="Shimizu N."/>
            <person name="Minoshima S."/>
            <person name="Kawasaki K."/>
            <person name="Sasaki T."/>
            <person name="Asakawa S."/>
            <person name="Kudoh J."/>
            <person name="Shintani A."/>
            <person name="Shibuya K."/>
            <person name="Yoshizaki Y."/>
            <person name="Aoki N."/>
            <person name="Mitsuyama S."/>
            <person name="Roe B.A."/>
            <person name="Chen F."/>
            <person name="Chu L."/>
            <person name="Crabtree J."/>
            <person name="Deschamps S."/>
            <person name="Do A."/>
            <person name="Do T."/>
            <person name="Dorman A."/>
            <person name="Fang F."/>
            <person name="Fu Y."/>
            <person name="Hu P."/>
            <person name="Hua A."/>
            <person name="Kenton S."/>
            <person name="Lai H."/>
            <person name="Lao H.I."/>
            <person name="Lewis J."/>
            <person name="Lewis S."/>
            <person name="Lin S.-P."/>
            <person name="Loh P."/>
            <person name="Malaj E."/>
            <person name="Nguyen T."/>
            <person name="Pan H."/>
            <person name="Phan S."/>
            <person name="Qi S."/>
            <person name="Qian Y."/>
            <person name="Ray L."/>
            <person name="Ren Q."/>
            <person name="Shaull S."/>
            <person name="Sloan D."/>
            <person name="Song L."/>
            <person name="Wang Q."/>
            <person name="Wang Y."/>
            <person name="Wang Z."/>
            <person name="White J."/>
            <person name="Willingham D."/>
            <person name="Wu H."/>
            <person name="Yao Z."/>
            <person name="Zhan M."/>
            <person name="Zhang G."/>
            <person name="Chissoe S."/>
            <person name="Murray J."/>
            <person name="Miller N."/>
            <person name="Minx P."/>
            <person name="Fulton R."/>
            <person name="Johnson D."/>
            <person name="Bemis G."/>
            <person name="Bentley D."/>
            <person name="Bradshaw H."/>
            <person name="Bourne S."/>
            <person name="Cordes M."/>
            <person name="Du Z."/>
            <person name="Fulton L."/>
            <person name="Goela D."/>
            <person name="Graves T."/>
            <person name="Hawkins J."/>
            <person name="Hinds K."/>
            <person name="Kemp K."/>
            <person name="Latreille P."/>
            <person name="Layman D."/>
            <person name="Ozersky P."/>
            <person name="Rohlfing T."/>
            <person name="Scheet P."/>
            <person name="Walker C."/>
            <person name="Wamsley A."/>
            <person name="Wohldmann P."/>
            <person name="Pepin K."/>
            <person name="Nelson J."/>
            <person name="Korf I."/>
            <person name="Bedell J.A."/>
            <person name="Hillier L.W."/>
            <person name="Mardis E."/>
            <person name="Waterston R."/>
            <person name="Wilson R."/>
            <person name="Emanuel B.S."/>
            <person name="Shaikh T."/>
            <person name="Kurahashi H."/>
            <person name="Saitta S."/>
            <person name="Budarf M.L."/>
            <person name="McDermid H.E."/>
            <person name="Johnson A."/>
            <person name="Wong A.C.C."/>
            <person name="Morrow B.E."/>
            <person name="Edelmann L."/>
            <person name="Kim U.J."/>
            <person name="Shizuya H."/>
            <person name="Simon M.I."/>
            <person name="Dumanski J.P."/>
            <person name="Peyrard M."/>
            <person name="Kedra D."/>
            <person name="Seroussi E."/>
            <person name="Fransson I."/>
            <person name="Tapia I."/>
            <person name="Bruder C.E."/>
            <person name="O'Brien K.P."/>
            <person name="Wilkinson P."/>
            <person name="Bodenteich A."/>
            <person name="Hartman K."/>
            <person name="Hu X."/>
            <person name="Khan A.S."/>
            <person name="Lane L."/>
            <person name="Tilahun Y."/>
            <person name="Wright H."/>
        </authorList>
    </citation>
    <scope>NUCLEOTIDE SEQUENCE [LARGE SCALE GENOMIC DNA]</scope>
</reference>
<reference key="2">
    <citation type="submission" date="2004-07" db="EMBL/GenBank/DDBJ databases">
        <title>Full-length cDNA libraries and normalization.</title>
        <authorList>
            <person name="Li W.B."/>
            <person name="Gruber C."/>
            <person name="Jessee J."/>
            <person name="Polayes D."/>
        </authorList>
    </citation>
    <scope>NUCLEOTIDE SEQUENCE [LARGE SCALE MRNA] OF 94-283</scope>
    <source>
        <tissue>Neuroblastoma</tissue>
    </source>
</reference>
<evidence type="ECO:0000250" key="1">
    <source>
        <dbReference type="UniProtKB" id="P13272"/>
    </source>
</evidence>
<evidence type="ECO:0000255" key="2"/>
<evidence type="ECO:0000255" key="3">
    <source>
        <dbReference type="PROSITE-ProRule" id="PRU00628"/>
    </source>
</evidence>
<evidence type="ECO:0000305" key="4"/>
<name>UCRIL_HUMAN</name>
<protein>
    <recommendedName>
        <fullName>Putative cytochrome b-c1 complex subunit Rieske-like protein 1</fullName>
    </recommendedName>
    <alternativeName>
        <fullName>Ubiquinol-cytochrome c reductase Rieske iron-sulfur subunit pseudogene 1</fullName>
    </alternativeName>
</protein>
<gene>
    <name type="primary">UQCRFS1P1</name>
    <name type="synonym">UQCRFSL1</name>
</gene>
<sequence>MQQIYTVKEIRSVAARSGPFAPVLSATSRGVAGALRPLVQATVPATPEQPVLDLKRPFLSRESLSGQAVRRPLVASVGLNVPASVCYSHTDIKVPDFSEYRRLEVLDSTKSSRESTEARKGFSYLVTGVTTVGVAYAAKNAVTQFVSSMSASADVLALAKIEIKLSDIPEGKNMAFKWRGKPLFVRHRTQKEIKQEAAVELSQLRDPQHDLDRVKKPEWVILIGVCTHLGCVPIANAGDFGGYYCPCHGSHYDASGRIRLGPATLNLEVPTYEFTSDDMVIVG</sequence>
<proteinExistence type="uncertain"/>
<dbReference type="EMBL" id="Z82206">
    <property type="status" value="NOT_ANNOTATED_CDS"/>
    <property type="molecule type" value="Genomic_DNA"/>
</dbReference>
<dbReference type="EMBL" id="CR592425">
    <property type="status" value="NOT_ANNOTATED_CDS"/>
    <property type="molecule type" value="mRNA"/>
</dbReference>
<dbReference type="SMR" id="P0C7P4"/>
<dbReference type="FunCoup" id="P0C7P4">
    <property type="interactions" value="331"/>
</dbReference>
<dbReference type="IntAct" id="P0C7P4">
    <property type="interactions" value="5"/>
</dbReference>
<dbReference type="MINT" id="P0C7P4"/>
<dbReference type="GlyGen" id="P0C7P4">
    <property type="glycosylation" value="1 site, 1 O-linked glycan (1 site)"/>
</dbReference>
<dbReference type="iPTMnet" id="P0C7P4"/>
<dbReference type="MetOSite" id="P0C7P4"/>
<dbReference type="PhosphoSitePlus" id="P0C7P4"/>
<dbReference type="SwissPalm" id="P0C7P4"/>
<dbReference type="BioMuta" id="HGNC:12588"/>
<dbReference type="DMDM" id="193806571"/>
<dbReference type="jPOST" id="P0C7P4"/>
<dbReference type="MassIVE" id="P0C7P4"/>
<dbReference type="ProteomicsDB" id="52357"/>
<dbReference type="Pumba" id="P0C7P4"/>
<dbReference type="AGR" id="HGNC:12588"/>
<dbReference type="GeneCards" id="UQCRFS1P1"/>
<dbReference type="HGNC" id="HGNC:12588">
    <property type="gene designation" value="UQCRFS1P1"/>
</dbReference>
<dbReference type="neXtProt" id="NX_P0C7P4"/>
<dbReference type="InParanoid" id="P0C7P4"/>
<dbReference type="PAN-GO" id="P0C7P4">
    <property type="GO annotations" value="3 GO annotations based on evolutionary models"/>
</dbReference>
<dbReference type="PhylomeDB" id="P0C7P4"/>
<dbReference type="PathwayCommons" id="P0C7P4"/>
<dbReference type="SignaLink" id="P0C7P4"/>
<dbReference type="ChiTaRS" id="UQCRFS1P1">
    <property type="organism name" value="human"/>
</dbReference>
<dbReference type="Pharos" id="P0C7P4">
    <property type="development level" value="Tdark"/>
</dbReference>
<dbReference type="PRO" id="PR:P0C7P4"/>
<dbReference type="Proteomes" id="UP000005640">
    <property type="component" value="Unplaced"/>
</dbReference>
<dbReference type="RNAct" id="P0C7P4">
    <property type="molecule type" value="protein"/>
</dbReference>
<dbReference type="GO" id="GO:0005739">
    <property type="term" value="C:mitochondrion"/>
    <property type="evidence" value="ECO:0006056"/>
    <property type="project" value="FlyBase"/>
</dbReference>
<dbReference type="GO" id="GO:0045275">
    <property type="term" value="C:respiratory chain complex III"/>
    <property type="evidence" value="ECO:0000318"/>
    <property type="project" value="GO_Central"/>
</dbReference>
<dbReference type="GO" id="GO:0051537">
    <property type="term" value="F:2 iron, 2 sulfur cluster binding"/>
    <property type="evidence" value="ECO:0007669"/>
    <property type="project" value="UniProtKB-KW"/>
</dbReference>
<dbReference type="GO" id="GO:0046872">
    <property type="term" value="F:metal ion binding"/>
    <property type="evidence" value="ECO:0007669"/>
    <property type="project" value="UniProtKB-KW"/>
</dbReference>
<dbReference type="GO" id="GO:0016491">
    <property type="term" value="F:oxidoreductase activity"/>
    <property type="evidence" value="ECO:0000318"/>
    <property type="project" value="GO_Central"/>
</dbReference>
<dbReference type="GO" id="GO:0008121">
    <property type="term" value="F:ubiquinol-cytochrome-c reductase activity"/>
    <property type="evidence" value="ECO:0007669"/>
    <property type="project" value="InterPro"/>
</dbReference>
<dbReference type="GO" id="GO:0006122">
    <property type="term" value="P:mitochondrial electron transport, ubiquinol to cytochrome c"/>
    <property type="evidence" value="ECO:0000318"/>
    <property type="project" value="GO_Central"/>
</dbReference>
<dbReference type="CDD" id="cd03470">
    <property type="entry name" value="Rieske_cytochrome_bc1"/>
    <property type="match status" value="1"/>
</dbReference>
<dbReference type="FunFam" id="1.20.5.270:FF:000001">
    <property type="entry name" value="Cytochrome b-c1 complex subunit Rieske, mitochondrial"/>
    <property type="match status" value="1"/>
</dbReference>
<dbReference type="FunFam" id="2.10.210.10:FF:000001">
    <property type="entry name" value="Cytochrome b-c1 complex subunit Rieske, mitochondrial"/>
    <property type="match status" value="1"/>
</dbReference>
<dbReference type="FunFam" id="2.102.10.10:FF:000001">
    <property type="entry name" value="Cytochrome b-c1 complex subunit Rieske, mitochondrial"/>
    <property type="match status" value="1"/>
</dbReference>
<dbReference type="Gene3D" id="2.10.210.10">
    <property type="entry name" value="Cytochrome Bc1 Complex, Chain I"/>
    <property type="match status" value="1"/>
</dbReference>
<dbReference type="Gene3D" id="2.102.10.10">
    <property type="entry name" value="Rieske [2Fe-2S] iron-sulphur domain"/>
    <property type="match status" value="1"/>
</dbReference>
<dbReference type="Gene3D" id="1.20.5.270">
    <property type="entry name" value="Ubiquinol cytochrome reductase, transmembrane domain"/>
    <property type="match status" value="1"/>
</dbReference>
<dbReference type="InterPro" id="IPR037008">
    <property type="entry name" value="bc1_Rieske_TM_sf"/>
</dbReference>
<dbReference type="InterPro" id="IPR011070">
    <property type="entry name" value="Globular_prot_asu/bsu"/>
</dbReference>
<dbReference type="InterPro" id="IPR017941">
    <property type="entry name" value="Rieske_2Fe-2S"/>
</dbReference>
<dbReference type="InterPro" id="IPR036922">
    <property type="entry name" value="Rieske_2Fe-2S_sf"/>
</dbReference>
<dbReference type="InterPro" id="IPR014349">
    <property type="entry name" value="Rieske_Fe-S_prot"/>
</dbReference>
<dbReference type="InterPro" id="IPR005805">
    <property type="entry name" value="Rieske_Fe-S_prot_C"/>
</dbReference>
<dbReference type="InterPro" id="IPR004192">
    <property type="entry name" value="Rieske_TM"/>
</dbReference>
<dbReference type="InterPro" id="IPR006317">
    <property type="entry name" value="Ubiquinol_cyt_c_Rdtase_Fe-S-su"/>
</dbReference>
<dbReference type="InterPro" id="IPR015248">
    <property type="entry name" value="UQCRFS1_N"/>
</dbReference>
<dbReference type="NCBIfam" id="TIGR01416">
    <property type="entry name" value="Rieske_proteo"/>
    <property type="match status" value="1"/>
</dbReference>
<dbReference type="PANTHER" id="PTHR10134">
    <property type="entry name" value="CYTOCHROME B-C1 COMPLEX SUBUNIT RIESKE, MITOCHONDRIAL"/>
    <property type="match status" value="1"/>
</dbReference>
<dbReference type="Pfam" id="PF00355">
    <property type="entry name" value="Rieske"/>
    <property type="match status" value="1"/>
</dbReference>
<dbReference type="Pfam" id="PF09165">
    <property type="entry name" value="Ubiq-Cytc-red_N"/>
    <property type="match status" value="1"/>
</dbReference>
<dbReference type="Pfam" id="PF02921">
    <property type="entry name" value="UCR_TM"/>
    <property type="match status" value="1"/>
</dbReference>
<dbReference type="PRINTS" id="PR00162">
    <property type="entry name" value="RIESKE"/>
</dbReference>
<dbReference type="SUPFAM" id="SSF50022">
    <property type="entry name" value="ISP domain"/>
    <property type="match status" value="1"/>
</dbReference>
<dbReference type="SUPFAM" id="SSF81502">
    <property type="entry name" value="ISP transmembrane anchor"/>
    <property type="match status" value="1"/>
</dbReference>
<dbReference type="SUPFAM" id="SSF56568">
    <property type="entry name" value="Non-globular alpha+beta subunits of globular proteins"/>
    <property type="match status" value="1"/>
</dbReference>
<dbReference type="PROSITE" id="PS51296">
    <property type="entry name" value="RIESKE"/>
    <property type="match status" value="1"/>
</dbReference>
<organism>
    <name type="scientific">Homo sapiens</name>
    <name type="common">Human</name>
    <dbReference type="NCBI Taxonomy" id="9606"/>
    <lineage>
        <taxon>Eukaryota</taxon>
        <taxon>Metazoa</taxon>
        <taxon>Chordata</taxon>
        <taxon>Craniata</taxon>
        <taxon>Vertebrata</taxon>
        <taxon>Euteleostomi</taxon>
        <taxon>Mammalia</taxon>
        <taxon>Eutheria</taxon>
        <taxon>Euarchontoglires</taxon>
        <taxon>Primates</taxon>
        <taxon>Haplorrhini</taxon>
        <taxon>Catarrhini</taxon>
        <taxon>Hominidae</taxon>
        <taxon>Homo</taxon>
    </lineage>
</organism>
<accession>P0C7P4</accession>
<comment type="cofactor">
    <cofactor evidence="3">
        <name>[2Fe-2S] cluster</name>
        <dbReference type="ChEBI" id="CHEBI:190135"/>
    </cofactor>
    <text evidence="3">Binds 1 [2Fe-2S] cluster per subunit.</text>
</comment>
<comment type="subcellular location">
    <subcellularLocation>
        <location evidence="2">Membrane</location>
        <topology evidence="2">Single-pass membrane protein</topology>
    </subcellularLocation>
</comment>
<comment type="similarity">
    <text evidence="4">Belongs to the Rieske iron-sulfur protein family.</text>
</comment>
<comment type="caution">
    <text evidence="4">Could be the product of a pseudogene.</text>
</comment>